<sequence>MVLFTRCEKARKEKLAAGYKPLVDYLIDCDTPTFLERIEAIQEWDRSRDDLYVWIPILDRMDGLLLKVAEKYKYKQDPKKECEVKLVEMEAHDVDYCLKMLKFTRRLLLNTENRFVYSSGDVLMYLLNCPNFTIKLAVMRILAILGERFVIAREKIVAHNIFGDHNLRKKTLKLALSLSSSVMDEDGEHFSLVDLYFDKKKVPQKWRKLRFTHYTSNDFKKSSQQKNNINETQTSIKKVTMTTQELCEHSLQQIFDKGMALLPAESWFDFSIKASVAKAFSDDSGENIDLRNIIIETKLNAIAFVNTIFSPPQVSSKLFELDPYAFNSLTDLISLSETKIPKELRTDALFTLECISLKHVWCSDIIRNLGGNISHGLLFQILRYIAKTLREATDEIDEEYNVRFFYLISNLADVKPLHESLFAAGLIPTLLEIVSIRNCPYKRTLASATHLLETFIDNSETTTEFIENDGFTMLITSVANEIDFTLAHPETWQPPKYSVVYYSISFRELAYIRSLLKLVLKLLSTDSGDRIRNLIDSPILVSLKKILENKLVFGLTLITYTLDVVQKVINSEPTIYPVLVEAGLIPYVIDNFPKLIGPSAELLSLLPDVVSAICLNPEGLKQVKEKGLINNLFDFLLDADHARILTGGDRSTEYGTDIDELARHYPDLKANIVEALCNVIRKMPSTFRNEREFLFTSPKDQKYFFHRKNEEILTDKEEHEPAYWELLDKGTMLDTFTSVLFGMSLGNGSFSQVPQHLEARDFLAIIFMENPPYEYFTSVAISNVTEVLQYLDEKYEDYAFMDVMKVLNDQLENLNDFLNSPNDRSFFLERDGENSVRSCHSKLCRLAAILNIVTNVYIDLTTLSCKRIMQIYSYFDKRGFSLIKNLKLLFQKCALEEMYIRQHMPDSVITETMPLPIVDVSGDGPPLQIYIDDPKKGDQKGKITSVKTRNTLQMRTILYTLQSNTAILFRCFLRLSHSRNMDLEHKDLTTEVHIFENVVENVIEMLKATELEGHLPYILVLLNFNTFVFTIPKASPNSTEILQTIPAYIFYQKGGYLLYLHIIRDLFTRMTKIKDLSSLDNINYIDESNGILTLSCLINALTFYNKSMQTETMENVQSIGKYYVSIDDDYNIMKALTVPIKVMALAMILDLDKSDSLFKTQSRNVPYSVFKQLLSMLKNIFTNVNIYTKELYELHWDLIFPPIKKISLFEQVGIPGDVAANYLTDTGDDLPADNSIGLFSPEQWEKYKKLIGEDKSIYYPQPMQAQYYKGCSSKELDELRDTFFNDGLPSRIFTVLPFYPKLVNAFAKTLLQIFTKYDEPTEVFAGRILDRILETDLDDPATLSSLIHLFGIFLNEKYIYQKASHLMQRFIEYLEKSLKPEHVNTPWFSKALYVYEIILAKSELPHLEELSKDVLLRYPLLSMAKVFRIPDPMKQKLFDILIRVSDISNFYSALATSRILIFYSRDELYANNIARSGILSRLLKVIGSFQKLDKINFLESSFLLLTRRCFETTENVDALIRAEINRSFTARPLGGGDDAVRELTTILEEKAHVVMRSPSQFIDVLCETARFHEFDDQGALVDYSLKRFLGEKDKNTQASSTEKSDIYERTGIMHLLLSQLMAASEKDWLSEPANSSDLPENKKAQLDPSRNPVCAYMIFLLKLLVELVSSYNQCKFEFLTFSRRNTYAERPRPRTTAINFFLYRLLDKPVGTDHDKHEAKRREVIGMLARSVIIGFLATVQDDRTTKTDVKLADPHMNFIRKFAIEAIIKAIRNATSSSKLLESNHLKLDMWFRIITSMVYVQAPYLRQLLDSNKVEADQYQLCKLVIDLGLPSVITEAMASIDLNYPFSKKIFNVAVEALNTISSTRNNFSEHFKIEDHDEVEDEVDESDKEEIPDMFKNSALGMYDVEDIEEDDDDDTSLIGDDDAMAFVDSDNGFEVVFSDEDDDMGEEDADDARSDSEENELSSEMQSSTADGTDVDYEVDDADGLIINIDQPSGDDEEMADYDANISHSSHSENEDDASMDVIEVYDDELSSGYDVDLSDYDVDESDWDSGLSSLSISDEDSESSEDEPINSTRMGDSRRRWLIAEGVELTDDSQGESEEDDRGVFRGIEHIFSNENEPLFRVHDEMRHRNHHRSINRTHFHSAMSAPSLSLLNRGRRNQSNLINPLGPTGLEQVENDISDQVTVAGSGSRPRSHHLHFSEVLVSGSFFDEPVLDGIILKSTVSRWKDIFDMFYDSKTYANCIIPTVINRLYKVSLALQKDLENKREQEKLKNKNLLFNEAKVESHNSSDAISVEQDDIQESNVTHDDHEPVYVTIQGSEVDIGGTDIDPEFMNALPDDIRADVFAQHVRERRAEARLNSDHNVHSREIDSDFLEAIPEDIREGILDTEAEEQRMFGRIGSSADVIRADDDVSNNDEEVENGLDHGNSNDRNNADPEKKKPARIYFAPLIDRAGIASLMKSVFISKPYIQREIYHELFYRLCSSKQNRNDLMNTFLFILSEGIIDQHSLEKVYNIISSRAMGHAKTTTVRQLPSDCTPLTVANQTIEILQSLIDADSRLKYFLIAEHDNLIVNKANNKSRKEALPDKKLRWPLWHLFSLLDRKLITDESVLMDLLTRILQVCTKTLAVLSTSSNGKENLSKKFHLPSFDEDDLMKILSIIMLDSCTTRVFQQTLNIIYNLSKLQGCMSIFTKHLVSLAISIMSKLKSALDGLSREVGTITTGMEINSELLQKFTLPSSDQAKLLKILTTVDFLYTHKRKEEERNVKDLQSLYDKMNGGPVWSSLSECLSQFEKSQAINTSATILLPLIESLMVVCRRSDLSQNRNTAVKYEDAKLLDFSKTRVENLFFPFTDAHKKLLNQMIRSNPKLMSGPFALLVKNPKVLDFDNKRYFFNAKLKSDNQERPKLPITVRREQVFLDSYRALFFKTNDEIKNSKLEITFKGESGVDAGGVTREWYQVLSRQMFNPDYALFLPVPSDKTTFHPNRTSGINPEHLSFFKFIGMIIGKAIRDQCFLDCHFSREVYKNILGRPVSLKDMESLDPDYYKSLVWILENDITDIIEETFSVETDDYGEHKVINLIEGGKDIIVTEANKQDYVKKVVEYKLQTSVKEQMDNFLVGFYALISKDLITIFDEQELELLISGLPDIDVDDWKNNTTYVNYTATCKEVSYFWRAVRSFDAEERAKLLQFVTGTSKVPLNGFKELSGVNGVCKFSIHRDFGSSERLPSSHTCFNQLNLPPYESYETLRGSLLLAINEGHEGFGLA</sequence>
<accession>Q03280</accession>
<accession>D6VT81</accession>
<accession>Q7LIK7</accession>
<keyword id="KW-0131">Cell cycle</keyword>
<keyword id="KW-0509">mRNA transport</keyword>
<keyword id="KW-0539">Nucleus</keyword>
<keyword id="KW-0597">Phosphoprotein</keyword>
<keyword id="KW-1185">Reference proteome</keyword>
<keyword id="KW-0698">rRNA processing</keyword>
<keyword id="KW-0804">Transcription</keyword>
<keyword id="KW-0805">Transcription regulation</keyword>
<keyword id="KW-0808">Transferase</keyword>
<keyword id="KW-0813">Transport</keyword>
<keyword id="KW-0833">Ubl conjugation pathway</keyword>
<dbReference type="EC" id="2.3.2.26"/>
<dbReference type="EMBL" id="U33050">
    <property type="protein sequence ID" value="AAB64910.1"/>
    <property type="molecule type" value="Genomic_DNA"/>
</dbReference>
<dbReference type="EMBL" id="D63905">
    <property type="protein sequence ID" value="BAA21482.1"/>
    <property type="molecule type" value="Genomic_DNA"/>
</dbReference>
<dbReference type="EMBL" id="BK006938">
    <property type="protein sequence ID" value="DAA12291.1"/>
    <property type="molecule type" value="Genomic_DNA"/>
</dbReference>
<dbReference type="PIR" id="S69625">
    <property type="entry name" value="S69625"/>
</dbReference>
<dbReference type="RefSeq" id="NP_010745.3">
    <property type="nucleotide sequence ID" value="NM_001180765.3"/>
</dbReference>
<dbReference type="SMR" id="Q03280"/>
<dbReference type="BioGRID" id="32511">
    <property type="interactions" value="736"/>
</dbReference>
<dbReference type="DIP" id="DIP-5927N"/>
<dbReference type="FunCoup" id="Q03280">
    <property type="interactions" value="1306"/>
</dbReference>
<dbReference type="IntAct" id="Q03280">
    <property type="interactions" value="25"/>
</dbReference>
<dbReference type="MINT" id="Q03280"/>
<dbReference type="STRING" id="4932.YDR457W"/>
<dbReference type="iPTMnet" id="Q03280"/>
<dbReference type="PaxDb" id="4932-YDR457W"/>
<dbReference type="PeptideAtlas" id="Q03280"/>
<dbReference type="EnsemblFungi" id="YDR457W_mRNA">
    <property type="protein sequence ID" value="YDR457W"/>
    <property type="gene ID" value="YDR457W"/>
</dbReference>
<dbReference type="GeneID" id="852068"/>
<dbReference type="KEGG" id="sce:YDR457W"/>
<dbReference type="AGR" id="SGD:S000002865"/>
<dbReference type="SGD" id="S000002865">
    <property type="gene designation" value="TOM1"/>
</dbReference>
<dbReference type="VEuPathDB" id="FungiDB:YDR457W"/>
<dbReference type="eggNOG" id="KOG0939">
    <property type="taxonomic scope" value="Eukaryota"/>
</dbReference>
<dbReference type="GeneTree" id="ENSGT00940000156319"/>
<dbReference type="HOGENOM" id="CLU_000215_0_1_1"/>
<dbReference type="InParanoid" id="Q03280"/>
<dbReference type="OMA" id="DCHFSRE"/>
<dbReference type="OrthoDB" id="8068875at2759"/>
<dbReference type="BioCyc" id="YEAST:G3O-29985-MONOMER"/>
<dbReference type="BRENDA" id="2.3.2.26">
    <property type="organism ID" value="984"/>
</dbReference>
<dbReference type="Reactome" id="R-SCE-6798695">
    <property type="pathway name" value="Neutrophil degranulation"/>
</dbReference>
<dbReference type="Reactome" id="R-SCE-983168">
    <property type="pathway name" value="Antigen processing: Ubiquitination &amp; Proteasome degradation"/>
</dbReference>
<dbReference type="UniPathway" id="UPA00143"/>
<dbReference type="BioGRID-ORCS" id="852068">
    <property type="hits" value="0 hits in 10 CRISPR screens"/>
</dbReference>
<dbReference type="PRO" id="PR:Q03280"/>
<dbReference type="Proteomes" id="UP000002311">
    <property type="component" value="Chromosome IV"/>
</dbReference>
<dbReference type="RNAct" id="Q03280">
    <property type="molecule type" value="protein"/>
</dbReference>
<dbReference type="GO" id="GO:0005737">
    <property type="term" value="C:cytoplasm"/>
    <property type="evidence" value="ECO:0000318"/>
    <property type="project" value="GO_Central"/>
</dbReference>
<dbReference type="GO" id="GO:0005730">
    <property type="term" value="C:nucleolus"/>
    <property type="evidence" value="ECO:0007005"/>
    <property type="project" value="SGD"/>
</dbReference>
<dbReference type="GO" id="GO:0005634">
    <property type="term" value="C:nucleus"/>
    <property type="evidence" value="ECO:0007005"/>
    <property type="project" value="SGD"/>
</dbReference>
<dbReference type="GO" id="GO:0061630">
    <property type="term" value="F:ubiquitin protein ligase activity"/>
    <property type="evidence" value="ECO:0000318"/>
    <property type="project" value="GO_Central"/>
</dbReference>
<dbReference type="GO" id="GO:0004842">
    <property type="term" value="F:ubiquitin-protein transferase activity"/>
    <property type="evidence" value="ECO:0000314"/>
    <property type="project" value="SGD"/>
</dbReference>
<dbReference type="GO" id="GO:0000448">
    <property type="term" value="P:cleavage in ITS2 between 5.8S rRNA and LSU-rRNA of tricistronic rRNA transcript (SSU-rRNA, 5.8S rRNA, LSU-rRNA)"/>
    <property type="evidence" value="ECO:0000315"/>
    <property type="project" value="SGD"/>
</dbReference>
<dbReference type="GO" id="GO:0000480">
    <property type="term" value="P:endonucleolytic cleavage in 5'-ETS of tricistronic rRNA transcript (SSU-rRNA, 5.8S rRNA, LSU-rRNA)"/>
    <property type="evidence" value="ECO:0000315"/>
    <property type="project" value="SGD"/>
</dbReference>
<dbReference type="GO" id="GO:0000447">
    <property type="term" value="P:endonucleolytic cleavage in ITS1 to separate SSU-rRNA from 5.8S rRNA and LSU-rRNA from tricistronic rRNA transcript (SSU-rRNA, 5.8S rRNA, LSU-rRNA)"/>
    <property type="evidence" value="ECO:0000315"/>
    <property type="project" value="SGD"/>
</dbReference>
<dbReference type="GO" id="GO:0000472">
    <property type="term" value="P:endonucleolytic cleavage to generate mature 5'-end of SSU-rRNA from (SSU-rRNA, 5.8S rRNA, LSU-rRNA)"/>
    <property type="evidence" value="ECO:0000315"/>
    <property type="project" value="SGD"/>
</dbReference>
<dbReference type="GO" id="GO:0000278">
    <property type="term" value="P:mitotic cell cycle"/>
    <property type="evidence" value="ECO:0000315"/>
    <property type="project" value="SGD"/>
</dbReference>
<dbReference type="GO" id="GO:0051028">
    <property type="term" value="P:mRNA transport"/>
    <property type="evidence" value="ECO:0007669"/>
    <property type="project" value="UniProtKB-KW"/>
</dbReference>
<dbReference type="GO" id="GO:0006913">
    <property type="term" value="P:nucleocytoplasmic transport"/>
    <property type="evidence" value="ECO:0000315"/>
    <property type="project" value="SGD"/>
</dbReference>
<dbReference type="GO" id="GO:0006997">
    <property type="term" value="P:nucleus organization"/>
    <property type="evidence" value="ECO:0000315"/>
    <property type="project" value="SGD"/>
</dbReference>
<dbReference type="GO" id="GO:0016567">
    <property type="term" value="P:protein ubiquitination"/>
    <property type="evidence" value="ECO:0000314"/>
    <property type="project" value="SGD"/>
</dbReference>
<dbReference type="GO" id="GO:0008361">
    <property type="term" value="P:regulation of cell size"/>
    <property type="evidence" value="ECO:0007001"/>
    <property type="project" value="SGD"/>
</dbReference>
<dbReference type="GO" id="GO:0006511">
    <property type="term" value="P:ubiquitin-dependent protein catabolic process"/>
    <property type="evidence" value="ECO:0000315"/>
    <property type="project" value="SGD"/>
</dbReference>
<dbReference type="CDD" id="cd00078">
    <property type="entry name" value="HECTc"/>
    <property type="match status" value="1"/>
</dbReference>
<dbReference type="FunFam" id="1.25.10.10:FF:000792">
    <property type="entry name" value="E3 ubiquitin ligase"/>
    <property type="match status" value="1"/>
</dbReference>
<dbReference type="FunFam" id="3.30.2410.10:FF:000004">
    <property type="entry name" value="E3 ubiquitin-protein ligase HUWE1, variant"/>
    <property type="match status" value="1"/>
</dbReference>
<dbReference type="FunFam" id="3.30.2160.10:FF:000001">
    <property type="entry name" value="E3 ubiquitin-protein ligase NEDD4-like"/>
    <property type="match status" value="1"/>
</dbReference>
<dbReference type="FunFam" id="3.90.1750.10:FF:000003">
    <property type="entry name" value="E3 ubiquitin-protein ligase UPL1"/>
    <property type="match status" value="1"/>
</dbReference>
<dbReference type="Gene3D" id="3.30.2160.10">
    <property type="entry name" value="Hect, E3 ligase catalytic domain"/>
    <property type="match status" value="1"/>
</dbReference>
<dbReference type="Gene3D" id="3.30.2410.10">
    <property type="entry name" value="Hect, E3 ligase catalytic domain"/>
    <property type="match status" value="1"/>
</dbReference>
<dbReference type="Gene3D" id="3.90.1750.10">
    <property type="entry name" value="Hect, E3 ligase catalytic domains"/>
    <property type="match status" value="1"/>
</dbReference>
<dbReference type="Gene3D" id="1.25.10.10">
    <property type="entry name" value="Leucine-rich Repeat Variant"/>
    <property type="match status" value="1"/>
</dbReference>
<dbReference type="InterPro" id="IPR011989">
    <property type="entry name" value="ARM-like"/>
</dbReference>
<dbReference type="InterPro" id="IPR016024">
    <property type="entry name" value="ARM-type_fold"/>
</dbReference>
<dbReference type="InterPro" id="IPR010309">
    <property type="entry name" value="E3_Ub_ligase_DUF908"/>
</dbReference>
<dbReference type="InterPro" id="IPR010314">
    <property type="entry name" value="E3_Ub_ligase_DUF913"/>
</dbReference>
<dbReference type="InterPro" id="IPR050409">
    <property type="entry name" value="E3_ubiq-protein_ligase"/>
</dbReference>
<dbReference type="InterPro" id="IPR000569">
    <property type="entry name" value="HECT_dom"/>
</dbReference>
<dbReference type="InterPro" id="IPR035983">
    <property type="entry name" value="Hect_E3_ubiquitin_ligase"/>
</dbReference>
<dbReference type="InterPro" id="IPR025527">
    <property type="entry name" value="HUWE1/Rev1_UBM"/>
</dbReference>
<dbReference type="PANTHER" id="PTHR11254:SF67">
    <property type="entry name" value="E3 UBIQUITIN-PROTEIN LIGASE HUWE1"/>
    <property type="match status" value="1"/>
</dbReference>
<dbReference type="PANTHER" id="PTHR11254">
    <property type="entry name" value="HECT DOMAIN UBIQUITIN-PROTEIN LIGASE"/>
    <property type="match status" value="1"/>
</dbReference>
<dbReference type="Pfam" id="PF06012">
    <property type="entry name" value="DUF908"/>
    <property type="match status" value="1"/>
</dbReference>
<dbReference type="Pfam" id="PF06025">
    <property type="entry name" value="DUF913"/>
    <property type="match status" value="1"/>
</dbReference>
<dbReference type="Pfam" id="PF00632">
    <property type="entry name" value="HECT"/>
    <property type="match status" value="1"/>
</dbReference>
<dbReference type="Pfam" id="PF14377">
    <property type="entry name" value="UBM"/>
    <property type="match status" value="2"/>
</dbReference>
<dbReference type="SMART" id="SM00119">
    <property type="entry name" value="HECTc"/>
    <property type="match status" value="1"/>
</dbReference>
<dbReference type="SUPFAM" id="SSF48371">
    <property type="entry name" value="ARM repeat"/>
    <property type="match status" value="1"/>
</dbReference>
<dbReference type="SUPFAM" id="SSF56204">
    <property type="entry name" value="Hect, E3 ligase catalytic domain"/>
    <property type="match status" value="1"/>
</dbReference>
<dbReference type="PROSITE" id="PS50237">
    <property type="entry name" value="HECT"/>
    <property type="match status" value="1"/>
</dbReference>
<comment type="function">
    <text evidence="3 4 5 7 10">Probable ubiquitin ligase protein involved in many cellular processes, such as transcription regulation, maintenance of nuclear structure, cell cycle, mRNA export and rRNA maturation. E3 ubiquitin ligase proteins mediate ubiquitination and subsequent proteasomal degradation of target proteins. Involved in transcription regulation by interacting, and probably mediating, ubiquitination of some subunit of the SAGA complex. Required for SPT7 ubiquitination. Participates in mRNA export from the nucleus by regulating the transport of hnRNP proteins. Required for the shuttling of hnRNP protein NAB2, probably by mediating ubiquitination of a protein associated with NAB2. Also required for full induction of the general stress and heat-shock responses. Involved in 18S rRNA maturation by affecting several early steps in the rRNA processing pathway.</text>
</comment>
<comment type="catalytic activity">
    <reaction>
        <text>S-ubiquitinyl-[E2 ubiquitin-conjugating enzyme]-L-cysteine + [acceptor protein]-L-lysine = [E2 ubiquitin-conjugating enzyme]-L-cysteine + N(6)-ubiquitinyl-[acceptor protein]-L-lysine.</text>
        <dbReference type="EC" id="2.3.2.26"/>
    </reaction>
</comment>
<comment type="pathway">
    <text>Protein modification; protein ubiquitination.</text>
</comment>
<comment type="subunit">
    <text evidence="6 10">Interacts with the ADA3/NGG1 subunit of the SAGA complex. Interacts with KRR1.</text>
</comment>
<comment type="subcellular location">
    <subcellularLocation>
        <location evidence="5 8">Nucleus</location>
        <location evidence="5 8">Nucleolus</location>
    </subcellularLocation>
</comment>
<comment type="miscellaneous">
    <text evidence="9">Present with 350 molecules/cell in log phase SD medium.</text>
</comment>
<comment type="similarity">
    <text evidence="11">Belongs to the UPL family. TOM1/PTR1 subfamily.</text>
</comment>
<proteinExistence type="evidence at protein level"/>
<organism>
    <name type="scientific">Saccharomyces cerevisiae (strain ATCC 204508 / S288c)</name>
    <name type="common">Baker's yeast</name>
    <dbReference type="NCBI Taxonomy" id="559292"/>
    <lineage>
        <taxon>Eukaryota</taxon>
        <taxon>Fungi</taxon>
        <taxon>Dikarya</taxon>
        <taxon>Ascomycota</taxon>
        <taxon>Saccharomycotina</taxon>
        <taxon>Saccharomycetes</taxon>
        <taxon>Saccharomycetales</taxon>
        <taxon>Saccharomycetaceae</taxon>
        <taxon>Saccharomyces</taxon>
    </lineage>
</organism>
<protein>
    <recommendedName>
        <fullName>E3 ubiquitin-protein ligase TOM1</fullName>
        <ecNumber>2.3.2.26</ecNumber>
    </recommendedName>
    <alternativeName>
        <fullName>HECT-type E3 ubiquitin transferase TOM1</fullName>
    </alternativeName>
    <alternativeName>
        <fullName>Suppressor of snRNA protein 2</fullName>
    </alternativeName>
    <alternativeName>
        <fullName>Temperature-dependent organization in mitotic nucleus protein 1</fullName>
    </alternativeName>
</protein>
<gene>
    <name type="primary">TOM1</name>
    <name type="synonym">SSR2</name>
    <name type="ordered locus">YDR457W</name>
    <name type="ORF">D8035.1</name>
</gene>
<reference key="1">
    <citation type="journal article" date="1997" name="Nature">
        <title>The nucleotide sequence of Saccharomyces cerevisiae chromosome IV.</title>
        <authorList>
            <person name="Jacq C."/>
            <person name="Alt-Moerbe J."/>
            <person name="Andre B."/>
            <person name="Arnold W."/>
            <person name="Bahr A."/>
            <person name="Ballesta J.P.G."/>
            <person name="Bargues M."/>
            <person name="Baron L."/>
            <person name="Becker A."/>
            <person name="Biteau N."/>
            <person name="Bloecker H."/>
            <person name="Blugeon C."/>
            <person name="Boskovic J."/>
            <person name="Brandt P."/>
            <person name="Brueckner M."/>
            <person name="Buitrago M.J."/>
            <person name="Coster F."/>
            <person name="Delaveau T."/>
            <person name="del Rey F."/>
            <person name="Dujon B."/>
            <person name="Eide L.G."/>
            <person name="Garcia-Cantalejo J.M."/>
            <person name="Goffeau A."/>
            <person name="Gomez-Peris A."/>
            <person name="Granotier C."/>
            <person name="Hanemann V."/>
            <person name="Hankeln T."/>
            <person name="Hoheisel J.D."/>
            <person name="Jaeger W."/>
            <person name="Jimenez A."/>
            <person name="Jonniaux J.-L."/>
            <person name="Kraemer C."/>
            <person name="Kuester H."/>
            <person name="Laamanen P."/>
            <person name="Legros Y."/>
            <person name="Louis E.J."/>
            <person name="Moeller-Rieker S."/>
            <person name="Monnet A."/>
            <person name="Moro M."/>
            <person name="Mueller-Auer S."/>
            <person name="Nussbaumer B."/>
            <person name="Paricio N."/>
            <person name="Paulin L."/>
            <person name="Perea J."/>
            <person name="Perez-Alonso M."/>
            <person name="Perez-Ortin J.E."/>
            <person name="Pohl T.M."/>
            <person name="Prydz H."/>
            <person name="Purnelle B."/>
            <person name="Rasmussen S.W."/>
            <person name="Remacha M.A."/>
            <person name="Revuelta J.L."/>
            <person name="Rieger M."/>
            <person name="Salom D."/>
            <person name="Saluz H.P."/>
            <person name="Saiz J.E."/>
            <person name="Saren A.-M."/>
            <person name="Schaefer M."/>
            <person name="Scharfe M."/>
            <person name="Schmidt E.R."/>
            <person name="Schneider C."/>
            <person name="Scholler P."/>
            <person name="Schwarz S."/>
            <person name="Soler-Mira A."/>
            <person name="Urrestarazu L.A."/>
            <person name="Verhasselt P."/>
            <person name="Vissers S."/>
            <person name="Voet M."/>
            <person name="Volckaert G."/>
            <person name="Wagner G."/>
            <person name="Wambutt R."/>
            <person name="Wedler E."/>
            <person name="Wedler H."/>
            <person name="Woelfl S."/>
            <person name="Harris D.E."/>
            <person name="Bowman S."/>
            <person name="Brown D."/>
            <person name="Churcher C.M."/>
            <person name="Connor R."/>
            <person name="Dedman K."/>
            <person name="Gentles S."/>
            <person name="Hamlin N."/>
            <person name="Hunt S."/>
            <person name="Jones L."/>
            <person name="McDonald S."/>
            <person name="Murphy L.D."/>
            <person name="Niblett D."/>
            <person name="Odell C."/>
            <person name="Oliver K."/>
            <person name="Rajandream M.A."/>
            <person name="Richards C."/>
            <person name="Shore L."/>
            <person name="Walsh S.V."/>
            <person name="Barrell B.G."/>
            <person name="Dietrich F.S."/>
            <person name="Mulligan J.T."/>
            <person name="Allen E."/>
            <person name="Araujo R."/>
            <person name="Aviles E."/>
            <person name="Berno A."/>
            <person name="Carpenter J."/>
            <person name="Chen E."/>
            <person name="Cherry J.M."/>
            <person name="Chung E."/>
            <person name="Duncan M."/>
            <person name="Hunicke-Smith S."/>
            <person name="Hyman R.W."/>
            <person name="Komp C."/>
            <person name="Lashkari D."/>
            <person name="Lew H."/>
            <person name="Lin D."/>
            <person name="Mosedale D."/>
            <person name="Nakahara K."/>
            <person name="Namath A."/>
            <person name="Oefner P."/>
            <person name="Oh C."/>
            <person name="Petel F.X."/>
            <person name="Roberts D."/>
            <person name="Schramm S."/>
            <person name="Schroeder M."/>
            <person name="Shogren T."/>
            <person name="Shroff N."/>
            <person name="Winant A."/>
            <person name="Yelton M.A."/>
            <person name="Botstein D."/>
            <person name="Davis R.W."/>
            <person name="Johnston M."/>
            <person name="Andrews S."/>
            <person name="Brinkman R."/>
            <person name="Cooper J."/>
            <person name="Ding H."/>
            <person name="Du Z."/>
            <person name="Favello A."/>
            <person name="Fulton L."/>
            <person name="Gattung S."/>
            <person name="Greco T."/>
            <person name="Hallsworth K."/>
            <person name="Hawkins J."/>
            <person name="Hillier L.W."/>
            <person name="Jier M."/>
            <person name="Johnson D."/>
            <person name="Johnston L."/>
            <person name="Kirsten J."/>
            <person name="Kucaba T."/>
            <person name="Langston Y."/>
            <person name="Latreille P."/>
            <person name="Le T."/>
            <person name="Mardis E."/>
            <person name="Menezes S."/>
            <person name="Miller N."/>
            <person name="Nhan M."/>
            <person name="Pauley A."/>
            <person name="Peluso D."/>
            <person name="Rifkin L."/>
            <person name="Riles L."/>
            <person name="Taich A."/>
            <person name="Trevaskis E."/>
            <person name="Vignati D."/>
            <person name="Wilcox L."/>
            <person name="Wohldman P."/>
            <person name="Vaudin M."/>
            <person name="Wilson R."/>
            <person name="Waterston R."/>
            <person name="Albermann K."/>
            <person name="Hani J."/>
            <person name="Heumann K."/>
            <person name="Kleine K."/>
            <person name="Mewes H.-W."/>
            <person name="Zollner A."/>
            <person name="Zaccaria P."/>
        </authorList>
    </citation>
    <scope>NUCLEOTIDE SEQUENCE [LARGE SCALE GENOMIC DNA]</scope>
    <source>
        <strain>ATCC 204508 / S288c</strain>
    </source>
</reference>
<reference key="2">
    <citation type="journal article" date="2014" name="G3 (Bethesda)">
        <title>The reference genome sequence of Saccharomyces cerevisiae: Then and now.</title>
        <authorList>
            <person name="Engel S.R."/>
            <person name="Dietrich F.S."/>
            <person name="Fisk D.G."/>
            <person name="Binkley G."/>
            <person name="Balakrishnan R."/>
            <person name="Costanzo M.C."/>
            <person name="Dwight S.S."/>
            <person name="Hitz B.C."/>
            <person name="Karra K."/>
            <person name="Nash R.S."/>
            <person name="Weng S."/>
            <person name="Wong E.D."/>
            <person name="Lloyd P."/>
            <person name="Skrzypek M.S."/>
            <person name="Miyasato S.R."/>
            <person name="Simison M."/>
            <person name="Cherry J.M."/>
        </authorList>
    </citation>
    <scope>GENOME REANNOTATION</scope>
    <source>
        <strain>ATCC 204508 / S288c</strain>
    </source>
</reference>
<reference key="3">
    <citation type="journal article" date="1999" name="Gene">
        <title>Yeast tom1 mutant exhibits pleiotropic defects in nuclear division, maintenance of nuclear structure and nucleocytoplasmic transport at high temperatures.</title>
        <authorList>
            <person name="Utsugi T."/>
            <person name="Hirata A."/>
            <person name="Sekiguchi Y."/>
            <person name="Sasaki T."/>
            <person name="Toh-e A."/>
            <person name="Kikuchi Y."/>
        </authorList>
    </citation>
    <scope>NUCLEOTIDE SEQUENCE [GENOMIC DNA] OF 2156-3268</scope>
    <scope>FUNCTION</scope>
    <scope>MUTAGENESIS OF CYS-3235</scope>
</reference>
<reference key="4">
    <citation type="journal article" date="1998" name="J. Mol. Biol.">
        <title>TOM1p, a yeast hect-domain protein which mediates transcriptional regulation through the ADA/SAGA coactivator complexes.</title>
        <authorList>
            <person name="Saleh A."/>
            <person name="Collart M."/>
            <person name="Martens J.A."/>
            <person name="Genereaux J."/>
            <person name="Allard S."/>
            <person name="Cote J."/>
            <person name="Brandl C.J."/>
        </authorList>
    </citation>
    <scope>FUNCTION</scope>
    <scope>INTERACTION WITH ADA3</scope>
    <scope>MUTAGENESIS OF CYS-3235</scope>
</reference>
<reference key="5">
    <citation type="journal article" date="2000" name="Mol. Gen. Genet.">
        <title>Extragenic suppressors that rescue defects in the heat stress response of the budding yeast mutant tom1.</title>
        <authorList>
            <person name="Sasaki T."/>
            <person name="Toh-e A."/>
            <person name="Kikuchi Y."/>
        </authorList>
    </citation>
    <scope>FUNCTION</scope>
</reference>
<reference key="6">
    <citation type="journal article" date="2000" name="Curr. Biol.">
        <title>A putative ubiquitin ligase required for efficient mRNA export differentially affects hnRNP transport.</title>
        <authorList>
            <person name="Duncan K."/>
            <person name="Umen J.G."/>
            <person name="Guthrie C."/>
        </authorList>
    </citation>
    <scope>FUNCTION</scope>
    <scope>SUBCELLULAR LOCATION</scope>
    <scope>MUTAGENESIS OF CYS-3235</scope>
</reference>
<reference key="7">
    <citation type="journal article" date="2000" name="Mol. Cell. Biol.">
        <title>Yeast Krr1p physically and functionally interacts with a novel essential Kri1p, and both proteins are required for 40S ribosome biogenesis in the nucleolus.</title>
        <authorList>
            <person name="Sasaki T."/>
            <person name="Toh-e A."/>
            <person name="Kikuchi Y."/>
        </authorList>
    </citation>
    <scope>INTERACTION WITH KRR1</scope>
</reference>
<reference key="8">
    <citation type="journal article" date="2001" name="Genetics">
        <title>Genes encoding ribosomal proteins Rps0A/B of Saccharomyces cerevisiae interact with TOM1 mutants defective in ribosome synthesis.</title>
        <authorList>
            <person name="Tabb A.L."/>
            <person name="Utsugi T."/>
            <person name="Wooten-Kee C.R."/>
            <person name="Sasaki T."/>
            <person name="Edling S.A."/>
            <person name="Gump W."/>
            <person name="Kikuchi Y."/>
            <person name="Ellis S.R."/>
        </authorList>
    </citation>
    <scope>FUNCTION</scope>
</reference>
<reference key="9">
    <citation type="journal article" date="2003" name="Nature">
        <title>Global analysis of protein localization in budding yeast.</title>
        <authorList>
            <person name="Huh W.-K."/>
            <person name="Falvo J.V."/>
            <person name="Gerke L.C."/>
            <person name="Carroll A.S."/>
            <person name="Howson R.W."/>
            <person name="Weissman J.S."/>
            <person name="O'Shea E.K."/>
        </authorList>
    </citation>
    <scope>SUBCELLULAR LOCATION [LARGE SCALE ANALYSIS]</scope>
</reference>
<reference key="10">
    <citation type="journal article" date="2003" name="Nature">
        <title>Global analysis of protein expression in yeast.</title>
        <authorList>
            <person name="Ghaemmaghami S."/>
            <person name="Huh W.-K."/>
            <person name="Bower K."/>
            <person name="Howson R.W."/>
            <person name="Belle A."/>
            <person name="Dephoure N."/>
            <person name="O'Shea E.K."/>
            <person name="Weissman J.S."/>
        </authorList>
    </citation>
    <scope>LEVEL OF PROTEIN EXPRESSION [LARGE SCALE ANALYSIS]</scope>
</reference>
<reference key="11">
    <citation type="journal article" date="2007" name="J. Proteome Res.">
        <title>Large-scale phosphorylation analysis of alpha-factor-arrested Saccharomyces cerevisiae.</title>
        <authorList>
            <person name="Li X."/>
            <person name="Gerber S.A."/>
            <person name="Rudner A.D."/>
            <person name="Beausoleil S.A."/>
            <person name="Haas W."/>
            <person name="Villen J."/>
            <person name="Elias J.E."/>
            <person name="Gygi S.P."/>
        </authorList>
    </citation>
    <scope>PHOSPHORYLATION [LARGE SCALE ANALYSIS] AT SER-1890 AND SER-2418</scope>
    <scope>IDENTIFICATION BY MASS SPECTROMETRY [LARGE SCALE ANALYSIS]</scope>
    <source>
        <strain>ADR376</strain>
    </source>
</reference>
<reference key="12">
    <citation type="journal article" date="2008" name="Mol. Cell. Proteomics">
        <title>A multidimensional chromatography technology for in-depth phosphoproteome analysis.</title>
        <authorList>
            <person name="Albuquerque C.P."/>
            <person name="Smolka M.B."/>
            <person name="Payne S.H."/>
            <person name="Bafna V."/>
            <person name="Eng J."/>
            <person name="Zhou H."/>
        </authorList>
    </citation>
    <scope>PHOSPHORYLATION [LARGE SCALE ANALYSIS] AT SER-1890; SER-2376 AND SER-2418</scope>
    <scope>IDENTIFICATION BY MASS SPECTROMETRY [LARGE SCALE ANALYSIS]</scope>
</reference>
<reference key="13">
    <citation type="journal article" date="2009" name="Science">
        <title>Global analysis of Cdk1 substrate phosphorylation sites provides insights into evolution.</title>
        <authorList>
            <person name="Holt L.J."/>
            <person name="Tuch B.B."/>
            <person name="Villen J."/>
            <person name="Johnson A.D."/>
            <person name="Gygi S.P."/>
            <person name="Morgan D.O."/>
        </authorList>
    </citation>
    <scope>PHOSPHORYLATION [LARGE SCALE ANALYSIS] AT SER-1890; THR-2096; SER-2119; SER-2376; SER-2406 AND SER-2418</scope>
    <scope>IDENTIFICATION BY MASS SPECTROMETRY [LARGE SCALE ANALYSIS]</scope>
</reference>
<feature type="chain" id="PRO_0000120348" description="E3 ubiquitin-protein ligase TOM1">
    <location>
        <begin position="1"/>
        <end position="3268"/>
    </location>
</feature>
<feature type="domain" description="HECT" evidence="1">
    <location>
        <begin position="2932"/>
        <end position="3268"/>
    </location>
</feature>
<feature type="region of interest" description="Disordered" evidence="2">
    <location>
        <begin position="1941"/>
        <end position="2023"/>
    </location>
</feature>
<feature type="region of interest" description="Disordered" evidence="2">
    <location>
        <begin position="2038"/>
        <end position="2083"/>
    </location>
</feature>
<feature type="region of interest" description="Disordered" evidence="2">
    <location>
        <begin position="2416"/>
        <end position="2443"/>
    </location>
</feature>
<feature type="compositionally biased region" description="Acidic residues" evidence="2">
    <location>
        <begin position="1942"/>
        <end position="1955"/>
    </location>
</feature>
<feature type="compositionally biased region" description="Polar residues" evidence="2">
    <location>
        <begin position="1967"/>
        <end position="1976"/>
    </location>
</feature>
<feature type="compositionally biased region" description="Acidic residues" evidence="2">
    <location>
        <begin position="1978"/>
        <end position="1988"/>
    </location>
</feature>
<feature type="compositionally biased region" description="Acidic residues" evidence="2">
    <location>
        <begin position="2042"/>
        <end position="2053"/>
    </location>
</feature>
<feature type="compositionally biased region" description="Acidic residues" evidence="2">
    <location>
        <begin position="2063"/>
        <end position="2074"/>
    </location>
</feature>
<feature type="compositionally biased region" description="Acidic residues" evidence="2">
    <location>
        <begin position="2416"/>
        <end position="2426"/>
    </location>
</feature>
<feature type="active site" description="Glycyl thioester intermediate" evidence="1">
    <location>
        <position position="3235"/>
    </location>
</feature>
<feature type="modified residue" description="Phosphoserine" evidence="12 13 14">
    <location>
        <position position="1890"/>
    </location>
</feature>
<feature type="modified residue" description="Phosphothreonine" evidence="14">
    <location>
        <position position="2096"/>
    </location>
</feature>
<feature type="modified residue" description="Phosphoserine" evidence="14">
    <location>
        <position position="2119"/>
    </location>
</feature>
<feature type="modified residue" description="Phosphoserine" evidence="13 14">
    <location>
        <position position="2376"/>
    </location>
</feature>
<feature type="modified residue" description="Phosphoserine" evidence="14">
    <location>
        <position position="2406"/>
    </location>
</feature>
<feature type="modified residue" description="Phosphoserine" evidence="12 13 14">
    <location>
        <position position="2418"/>
    </location>
</feature>
<feature type="mutagenesis site" description="Loss of function. Induces a decrease in transcription activation." evidence="3 5 10">
    <original>C</original>
    <variation>A</variation>
    <location>
        <position position="3235"/>
    </location>
</feature>
<evidence type="ECO:0000255" key="1">
    <source>
        <dbReference type="PROSITE-ProRule" id="PRU00104"/>
    </source>
</evidence>
<evidence type="ECO:0000256" key="2">
    <source>
        <dbReference type="SAM" id="MobiDB-lite"/>
    </source>
</evidence>
<evidence type="ECO:0000269" key="3">
    <source>
    </source>
</evidence>
<evidence type="ECO:0000269" key="4">
    <source>
    </source>
</evidence>
<evidence type="ECO:0000269" key="5">
    <source>
    </source>
</evidence>
<evidence type="ECO:0000269" key="6">
    <source>
    </source>
</evidence>
<evidence type="ECO:0000269" key="7">
    <source>
    </source>
</evidence>
<evidence type="ECO:0000269" key="8">
    <source>
    </source>
</evidence>
<evidence type="ECO:0000269" key="9">
    <source>
    </source>
</evidence>
<evidence type="ECO:0000269" key="10">
    <source>
    </source>
</evidence>
<evidence type="ECO:0000305" key="11"/>
<evidence type="ECO:0007744" key="12">
    <source>
    </source>
</evidence>
<evidence type="ECO:0007744" key="13">
    <source>
    </source>
</evidence>
<evidence type="ECO:0007744" key="14">
    <source>
    </source>
</evidence>
<name>TOM1_YEAST</name>